<name>SOPD2_SALTY</name>
<reference key="1">
    <citation type="journal article" date="2001" name="Nature">
        <title>Complete genome sequence of Salmonella enterica serovar Typhimurium LT2.</title>
        <authorList>
            <person name="McClelland M."/>
            <person name="Sanderson K.E."/>
            <person name="Spieth J."/>
            <person name="Clifton S.W."/>
            <person name="Latreille P."/>
            <person name="Courtney L."/>
            <person name="Porwollik S."/>
            <person name="Ali J."/>
            <person name="Dante M."/>
            <person name="Du F."/>
            <person name="Hou S."/>
            <person name="Layman D."/>
            <person name="Leonard S."/>
            <person name="Nguyen C."/>
            <person name="Scott K."/>
            <person name="Holmes A."/>
            <person name="Grewal N."/>
            <person name="Mulvaney E."/>
            <person name="Ryan E."/>
            <person name="Sun H."/>
            <person name="Florea L."/>
            <person name="Miller W."/>
            <person name="Stoneking T."/>
            <person name="Nhan M."/>
            <person name="Waterston R."/>
            <person name="Wilson R.K."/>
        </authorList>
    </citation>
    <scope>NUCLEOTIDE SEQUENCE [LARGE SCALE GENOMIC DNA]</scope>
    <source>
        <strain>LT2 / SGSC1412 / ATCC 700720</strain>
    </source>
</reference>
<reference key="2">
    <citation type="journal article" date="2003" name="Traffic">
        <title>SopD2 is a novel type III secreted effector of Salmonella typhimurium that targets late endocytic compartments upon delivery into host cells.</title>
        <authorList>
            <person name="Brumell J.H."/>
            <person name="Kujat-Choy S."/>
            <person name="Brown N.F."/>
            <person name="Vallance B.A."/>
            <person name="Knodler L.A."/>
            <person name="Finlay B.B."/>
        </authorList>
    </citation>
    <scope>SUBCELLULAR LOCATION</scope>
    <scope>SECRETION VIA TYPE III SECRETION SYSTEM</scope>
    <scope>INDUCTION</scope>
    <scope>DOMAIN</scope>
    <scope>DISRUPTION PHENOTYPE</scope>
    <source>
        <strain>SL1344</strain>
    </source>
</reference>
<reference key="3">
    <citation type="journal article" date="2004" name="Mol. Microbiol.">
        <title>The related effector proteins SopD and SopD2 from Salmonella enterica serovar Typhimurium contribute to virulence during systemic infection of mice.</title>
        <authorList>
            <person name="Jiang X."/>
            <person name="Rossanese O.W."/>
            <person name="Brown N.F."/>
            <person name="Kujat-Choy S."/>
            <person name="Galan J.E."/>
            <person name="Finlay B.B."/>
            <person name="Brumell J.H."/>
        </authorList>
    </citation>
    <scope>FUNCTION</scope>
    <scope>DISRUPTION PHENOTYPE</scope>
    <source>
        <strain>SL1344</strain>
    </source>
</reference>
<reference key="4">
    <citation type="journal article" date="2006" name="Microbiology">
        <title>Mutational analysis of Salmonella translocated effector members SifA and SopD2 reveals domains implicated in translocation, subcellular localization and function.</title>
        <authorList>
            <person name="Brown N.F."/>
            <person name="Szeto J."/>
            <person name="Jiang X."/>
            <person name="Coombes B.K."/>
            <person name="Finlay B.B."/>
            <person name="Brumell J.H."/>
        </authorList>
    </citation>
    <scope>DOMAIN</scope>
    <scope>MUTAGENESIS OF TRP-37 AND PHE-44</scope>
    <source>
        <strain>SL1344</strain>
    </source>
</reference>
<reference key="5">
    <citation type="journal article" date="2010" name="Infect. Immun.">
        <title>Systematic analysis of the SsrAB virulon of Salmonella enterica.</title>
        <authorList>
            <person name="Xu X."/>
            <person name="Hensel M."/>
        </authorList>
    </citation>
    <scope>INDUCTION</scope>
    <source>
        <strain evidence="5">ATCC 14028 / SGSC 2980 / CDC 6516-60 / NCTC 12023</strain>
    </source>
</reference>
<proteinExistence type="evidence at protein level"/>
<gene>
    <name type="primary">sopD2</name>
    <name type="ordered locus">STM0972</name>
</gene>
<dbReference type="EMBL" id="AE006468">
    <property type="protein sequence ID" value="AAL19906.1"/>
    <property type="molecule type" value="Genomic_DNA"/>
</dbReference>
<dbReference type="RefSeq" id="NP_459947.1">
    <property type="nucleotide sequence ID" value="NC_003197.2"/>
</dbReference>
<dbReference type="RefSeq" id="WP_001145561.1">
    <property type="nucleotide sequence ID" value="NC_003197.2"/>
</dbReference>
<dbReference type="PDB" id="5CQ9">
    <property type="method" value="X-ray"/>
    <property type="resolution" value="3.00 A"/>
    <property type="chains" value="A/B=1-319"/>
</dbReference>
<dbReference type="PDBsum" id="5CQ9"/>
<dbReference type="SMR" id="Q8ZQC8"/>
<dbReference type="IntAct" id="Q8ZQC8">
    <property type="interactions" value="3"/>
</dbReference>
<dbReference type="MINT" id="Q8ZQC8"/>
<dbReference type="STRING" id="99287.STM0972"/>
<dbReference type="PaxDb" id="99287-STM0972"/>
<dbReference type="GeneID" id="1252490"/>
<dbReference type="KEGG" id="stm:STM0972"/>
<dbReference type="PATRIC" id="fig|99287.12.peg.1025"/>
<dbReference type="HOGENOM" id="CLU_072577_0_0_6"/>
<dbReference type="OMA" id="FKVCIKY"/>
<dbReference type="PhylomeDB" id="Q8ZQC8"/>
<dbReference type="BioCyc" id="SENT99287:STM0972-MONOMER"/>
<dbReference type="EvolutionaryTrace" id="Q8ZQC8"/>
<dbReference type="Proteomes" id="UP000001014">
    <property type="component" value="Chromosome"/>
</dbReference>
<dbReference type="GO" id="GO:0005576">
    <property type="term" value="C:extracellular region"/>
    <property type="evidence" value="ECO:0007669"/>
    <property type="project" value="UniProtKB-SubCell"/>
</dbReference>
<dbReference type="GO" id="GO:0033644">
    <property type="term" value="C:host cell membrane"/>
    <property type="evidence" value="ECO:0000314"/>
    <property type="project" value="UniProtKB"/>
</dbReference>
<dbReference type="GO" id="GO:0020002">
    <property type="term" value="C:host cell plasma membrane"/>
    <property type="evidence" value="ECO:0007669"/>
    <property type="project" value="UniProtKB-SubCell"/>
</dbReference>
<dbReference type="GO" id="GO:0016020">
    <property type="term" value="C:membrane"/>
    <property type="evidence" value="ECO:0007669"/>
    <property type="project" value="UniProtKB-KW"/>
</dbReference>
<dbReference type="GO" id="GO:0030254">
    <property type="term" value="P:protein secretion by the type III secretion system"/>
    <property type="evidence" value="ECO:0000314"/>
    <property type="project" value="UniProtKB"/>
</dbReference>
<dbReference type="DisProt" id="DP02655"/>
<dbReference type="FunFam" id="3.30.2440.10:FF:000004">
    <property type="entry name" value="Type III secretion system effector SopD2"/>
    <property type="match status" value="1"/>
</dbReference>
<dbReference type="Gene3D" id="3.30.2440.10">
    <property type="entry name" value="Secreted effector protein SifA"/>
    <property type="match status" value="1"/>
</dbReference>
<dbReference type="InterPro" id="IPR022747">
    <property type="entry name" value="SopD"/>
</dbReference>
<dbReference type="NCBIfam" id="NF011907">
    <property type="entry name" value="PRK15380.1"/>
    <property type="match status" value="1"/>
</dbReference>
<dbReference type="Pfam" id="PF11047">
    <property type="entry name" value="SopD"/>
    <property type="match status" value="1"/>
</dbReference>
<keyword id="KW-0002">3D-structure</keyword>
<keyword id="KW-1032">Host cell membrane</keyword>
<keyword id="KW-1043">Host membrane</keyword>
<keyword id="KW-0472">Membrane</keyword>
<keyword id="KW-1185">Reference proteome</keyword>
<keyword id="KW-0964">Secreted</keyword>
<keyword id="KW-0843">Virulence</keyword>
<evidence type="ECO:0000269" key="1">
    <source>
    </source>
</evidence>
<evidence type="ECO:0000269" key="2">
    <source>
    </source>
</evidence>
<evidence type="ECO:0000269" key="3">
    <source>
    </source>
</evidence>
<evidence type="ECO:0000269" key="4">
    <source>
    </source>
</evidence>
<evidence type="ECO:0000303" key="5">
    <source>
    </source>
</evidence>
<evidence type="ECO:0000305" key="6"/>
<evidence type="ECO:0007829" key="7">
    <source>
        <dbReference type="PDB" id="5CQ9"/>
    </source>
</evidence>
<sequence length="319" mass="37782">MPVTLSFGNRHNYEINHSRLARLMSPDKEEALYMGVWDRFKDCFRTHKKQEVLEVLYTLIHGCERENQAELNVDITGMEKIHAFTQLKEYANPSQQDRFVMRFDMNQTQVLFEIDGKVIDKCNLHRLLNVSENCIFKVMEEDEEELFLKICIKYGEKISRYPELLEGFANKLKDAVNEDDDVKDEVYKLMRSGEDRKMECVEWNGTLTEEEKNKLRCLQMGSFNITTQFFKIGYWELEGEVLFDMVHPTLSYLLQAYKPSLSSDLIETNTMLFSDVLNKDYDDYQNNKREIDAILRRIYRSHNNTLFISEKSSCRNMLI</sequence>
<feature type="chain" id="PRO_0000392204" description="Secreted effector protein sopD2">
    <location>
        <begin position="1"/>
        <end position="319"/>
    </location>
</feature>
<feature type="short sequence motif" description="Required to target late endocytic compartments">
    <location>
        <begin position="37"/>
        <end position="44"/>
    </location>
</feature>
<feature type="mutagenesis site" description="Localizes throughout the cytosol and not to late endocytic compartments; when associated with R-44." evidence="3">
    <original>W</original>
    <variation>P</variation>
    <location>
        <position position="37"/>
    </location>
</feature>
<feature type="mutagenesis site" description="Localizes throughout the cytosol and not to late endocytic compartments; when associated with P-37." evidence="3">
    <original>F</original>
    <variation>R</variation>
    <location>
        <position position="44"/>
    </location>
</feature>
<feature type="helix" evidence="7">
    <location>
        <begin position="38"/>
        <end position="44"/>
    </location>
</feature>
<feature type="helix" evidence="7">
    <location>
        <begin position="48"/>
        <end position="61"/>
    </location>
</feature>
<feature type="helix" evidence="7">
    <location>
        <begin position="77"/>
        <end position="89"/>
    </location>
</feature>
<feature type="helix" evidence="7">
    <location>
        <begin position="96"/>
        <end position="98"/>
    </location>
</feature>
<feature type="strand" evidence="7">
    <location>
        <begin position="99"/>
        <end position="103"/>
    </location>
</feature>
<feature type="strand" evidence="7">
    <location>
        <begin position="107"/>
        <end position="114"/>
    </location>
</feature>
<feature type="strand" evidence="7">
    <location>
        <begin position="117"/>
        <end position="123"/>
    </location>
</feature>
<feature type="helix" evidence="7">
    <location>
        <begin position="124"/>
        <end position="127"/>
    </location>
</feature>
<feature type="helix" evidence="7">
    <location>
        <begin position="141"/>
        <end position="160"/>
    </location>
</feature>
<feature type="helix" evidence="7">
    <location>
        <begin position="162"/>
        <end position="164"/>
    </location>
</feature>
<feature type="helix" evidence="7">
    <location>
        <begin position="170"/>
        <end position="178"/>
    </location>
</feature>
<feature type="helix" evidence="7">
    <location>
        <begin position="180"/>
        <end position="190"/>
    </location>
</feature>
<feature type="turn" evidence="7">
    <location>
        <begin position="191"/>
        <end position="193"/>
    </location>
</feature>
<feature type="helix" evidence="7">
    <location>
        <begin position="209"/>
        <end position="214"/>
    </location>
</feature>
<feature type="helix" evidence="7">
    <location>
        <begin position="216"/>
        <end position="219"/>
    </location>
</feature>
<feature type="turn" evidence="7">
    <location>
        <begin position="225"/>
        <end position="231"/>
    </location>
</feature>
<feature type="strand" evidence="7">
    <location>
        <begin position="232"/>
        <end position="237"/>
    </location>
</feature>
<feature type="strand" evidence="7">
    <location>
        <begin position="240"/>
        <end position="245"/>
    </location>
</feature>
<feature type="helix" evidence="7">
    <location>
        <begin position="248"/>
        <end position="255"/>
    </location>
</feature>
<feature type="helix" evidence="7">
    <location>
        <begin position="267"/>
        <end position="272"/>
    </location>
</feature>
<feature type="helix" evidence="7">
    <location>
        <begin position="274"/>
        <end position="286"/>
    </location>
</feature>
<feature type="helix" evidence="7">
    <location>
        <begin position="288"/>
        <end position="301"/>
    </location>
</feature>
<feature type="strand" evidence="7">
    <location>
        <begin position="308"/>
        <end position="310"/>
    </location>
</feature>
<organism>
    <name type="scientific">Salmonella typhimurium (strain LT2 / SGSC1412 / ATCC 700720)</name>
    <dbReference type="NCBI Taxonomy" id="99287"/>
    <lineage>
        <taxon>Bacteria</taxon>
        <taxon>Pseudomonadati</taxon>
        <taxon>Pseudomonadota</taxon>
        <taxon>Gammaproteobacteria</taxon>
        <taxon>Enterobacterales</taxon>
        <taxon>Enterobacteriaceae</taxon>
        <taxon>Salmonella</taxon>
    </lineage>
</organism>
<accession>Q8ZQC8</accession>
<protein>
    <recommendedName>
        <fullName>Secreted effector protein sopD2</fullName>
    </recommendedName>
    <alternativeName>
        <fullName>Salmonella outer protein D 2</fullName>
    </alternativeName>
</protein>
<comment type="function">
    <text evidence="2">Effector proteins function to alter host cell physiology and promote bacterial survival in host tissues. Contributes to the formation of Salmonella-induced filaments (Sifs) in infected epithelial cells and to replication in macrophages.</text>
</comment>
<comment type="subcellular location">
    <subcellularLocation>
        <location evidence="1">Secreted</location>
    </subcellularLocation>
    <subcellularLocation>
        <location evidence="1">Host cell membrane</location>
    </subcellularLocation>
    <text>Secreted via type III secretion system 2 (SPI-2 T3SS), and delivered into the host cell. Membrane-associated. Localizes to the Salmonella-containing vacuole (SCV) in infected cells and to late endocytic compartments in transfected cells.</text>
</comment>
<comment type="induction">
    <text evidence="1 4">Transcription is induced inside host cells and is dependent on the SsrA/SsrB and PhoP/PhoQ two-component systems (PubMed:12535274). Highly expressed in host macrophages and when grown in an acidic environment (PubMed:19858298).</text>
</comment>
<comment type="domain">
    <text evidence="1 3">The N-terminal domain mediates secretion by SPI-2 T3SS and targeting of late endocytic compartments in host cells.</text>
</comment>
<comment type="disruption phenotype">
    <text evidence="1 2">Mutation leads to a prolonged survival of infected mice. Deletion blocks Sifs formation at an intermediate stage, before fusion of late endosome compartments with the SCV, and impairs bacterial replication in mouse macrophages but not in human epithelial cells.</text>
</comment>
<comment type="similarity">
    <text evidence="6">Belongs to the SopD family.</text>
</comment>